<keyword id="KW-0175">Coiled coil</keyword>
<keyword id="KW-0233">DNA recombination</keyword>
<keyword id="KW-0269">Exonuclease</keyword>
<keyword id="KW-0378">Hydrolase</keyword>
<keyword id="KW-0540">Nuclease</keyword>
<keyword id="KW-1185">Reference proteome</keyword>
<protein>
    <recommendedName>
        <fullName>Nuclease SbcCD subunit D</fullName>
    </recommendedName>
</protein>
<accession>P23479</accession>
<accession>O06711</accession>
<accession>O31595</accession>
<name>SBCD_BACSU</name>
<reference key="1">
    <citation type="journal article" date="1997" name="Microbiology">
        <title>Sequencing of regions downstream of addA (98 degrees) and citG (289 degrees) in Bacillus subtilis.</title>
        <authorList>
            <person name="Medina N."/>
            <person name="Vannier F."/>
            <person name="Roche B."/>
            <person name="Autret S."/>
            <person name="Levine A."/>
            <person name="Seror S.J."/>
        </authorList>
    </citation>
    <scope>NUCLEOTIDE SEQUENCE [GENOMIC DNA]</scope>
    <source>
        <strain>168</strain>
    </source>
</reference>
<reference key="2">
    <citation type="journal article" date="1997" name="Nature">
        <title>The complete genome sequence of the Gram-positive bacterium Bacillus subtilis.</title>
        <authorList>
            <person name="Kunst F."/>
            <person name="Ogasawara N."/>
            <person name="Moszer I."/>
            <person name="Albertini A.M."/>
            <person name="Alloni G."/>
            <person name="Azevedo V."/>
            <person name="Bertero M.G."/>
            <person name="Bessieres P."/>
            <person name="Bolotin A."/>
            <person name="Borchert S."/>
            <person name="Borriss R."/>
            <person name="Boursier L."/>
            <person name="Brans A."/>
            <person name="Braun M."/>
            <person name="Brignell S.C."/>
            <person name="Bron S."/>
            <person name="Brouillet S."/>
            <person name="Bruschi C.V."/>
            <person name="Caldwell B."/>
            <person name="Capuano V."/>
            <person name="Carter N.M."/>
            <person name="Choi S.-K."/>
            <person name="Codani J.-J."/>
            <person name="Connerton I.F."/>
            <person name="Cummings N.J."/>
            <person name="Daniel R.A."/>
            <person name="Denizot F."/>
            <person name="Devine K.M."/>
            <person name="Duesterhoeft A."/>
            <person name="Ehrlich S.D."/>
            <person name="Emmerson P.T."/>
            <person name="Entian K.-D."/>
            <person name="Errington J."/>
            <person name="Fabret C."/>
            <person name="Ferrari E."/>
            <person name="Foulger D."/>
            <person name="Fritz C."/>
            <person name="Fujita M."/>
            <person name="Fujita Y."/>
            <person name="Fuma S."/>
            <person name="Galizzi A."/>
            <person name="Galleron N."/>
            <person name="Ghim S.-Y."/>
            <person name="Glaser P."/>
            <person name="Goffeau A."/>
            <person name="Golightly E.J."/>
            <person name="Grandi G."/>
            <person name="Guiseppi G."/>
            <person name="Guy B.J."/>
            <person name="Haga K."/>
            <person name="Haiech J."/>
            <person name="Harwood C.R."/>
            <person name="Henaut A."/>
            <person name="Hilbert H."/>
            <person name="Holsappel S."/>
            <person name="Hosono S."/>
            <person name="Hullo M.-F."/>
            <person name="Itaya M."/>
            <person name="Jones L.-M."/>
            <person name="Joris B."/>
            <person name="Karamata D."/>
            <person name="Kasahara Y."/>
            <person name="Klaerr-Blanchard M."/>
            <person name="Klein C."/>
            <person name="Kobayashi Y."/>
            <person name="Koetter P."/>
            <person name="Koningstein G."/>
            <person name="Krogh S."/>
            <person name="Kumano M."/>
            <person name="Kurita K."/>
            <person name="Lapidus A."/>
            <person name="Lardinois S."/>
            <person name="Lauber J."/>
            <person name="Lazarevic V."/>
            <person name="Lee S.-M."/>
            <person name="Levine A."/>
            <person name="Liu H."/>
            <person name="Masuda S."/>
            <person name="Mauel C."/>
            <person name="Medigue C."/>
            <person name="Medina N."/>
            <person name="Mellado R.P."/>
            <person name="Mizuno M."/>
            <person name="Moestl D."/>
            <person name="Nakai S."/>
            <person name="Noback M."/>
            <person name="Noone D."/>
            <person name="O'Reilly M."/>
            <person name="Ogawa K."/>
            <person name="Ogiwara A."/>
            <person name="Oudega B."/>
            <person name="Park S.-H."/>
            <person name="Parro V."/>
            <person name="Pohl T.M."/>
            <person name="Portetelle D."/>
            <person name="Porwollik S."/>
            <person name="Prescott A.M."/>
            <person name="Presecan E."/>
            <person name="Pujic P."/>
            <person name="Purnelle B."/>
            <person name="Rapoport G."/>
            <person name="Rey M."/>
            <person name="Reynolds S."/>
            <person name="Rieger M."/>
            <person name="Rivolta C."/>
            <person name="Rocha E."/>
            <person name="Roche B."/>
            <person name="Rose M."/>
            <person name="Sadaie Y."/>
            <person name="Sato T."/>
            <person name="Scanlan E."/>
            <person name="Schleich S."/>
            <person name="Schroeter R."/>
            <person name="Scoffone F."/>
            <person name="Sekiguchi J."/>
            <person name="Sekowska A."/>
            <person name="Seror S.J."/>
            <person name="Serror P."/>
            <person name="Shin B.-S."/>
            <person name="Soldo B."/>
            <person name="Sorokin A."/>
            <person name="Tacconi E."/>
            <person name="Takagi T."/>
            <person name="Takahashi H."/>
            <person name="Takemaru K."/>
            <person name="Takeuchi M."/>
            <person name="Tamakoshi A."/>
            <person name="Tanaka T."/>
            <person name="Terpstra P."/>
            <person name="Tognoni A."/>
            <person name="Tosato V."/>
            <person name="Uchiyama S."/>
            <person name="Vandenbol M."/>
            <person name="Vannier F."/>
            <person name="Vassarotti A."/>
            <person name="Viari A."/>
            <person name="Wambutt R."/>
            <person name="Wedler E."/>
            <person name="Wedler H."/>
            <person name="Weitzenegger T."/>
            <person name="Winters P."/>
            <person name="Wipat A."/>
            <person name="Yamamoto H."/>
            <person name="Yamane K."/>
            <person name="Yasumoto K."/>
            <person name="Yata K."/>
            <person name="Yoshida K."/>
            <person name="Yoshikawa H.-F."/>
            <person name="Zumstein E."/>
            <person name="Yoshikawa H."/>
            <person name="Danchin A."/>
        </authorList>
    </citation>
    <scope>NUCLEOTIDE SEQUENCE [LARGE SCALE GENOMIC DNA]</scope>
    <source>
        <strain>168</strain>
    </source>
</reference>
<reference key="3">
    <citation type="journal article" date="1999" name="Genome Res.">
        <title>Detecting and analyzing DNA sequencing errors: toward a higher quality of the Bacillus subtilis genome sequence.</title>
        <authorList>
            <person name="Medigue C."/>
            <person name="Rose M."/>
            <person name="Viari A."/>
            <person name="Danchin A."/>
        </authorList>
    </citation>
    <scope>SEQUENCE REVISION</scope>
</reference>
<reference key="4">
    <citation type="journal article" date="2009" name="Microbiology">
        <title>From a consortium sequence to a unified sequence: the Bacillus subtilis 168 reference genome a decade later.</title>
        <authorList>
            <person name="Barbe V."/>
            <person name="Cruveiller S."/>
            <person name="Kunst F."/>
            <person name="Lenoble P."/>
            <person name="Meurice G."/>
            <person name="Sekowska A."/>
            <person name="Vallenet D."/>
            <person name="Wang T."/>
            <person name="Moszer I."/>
            <person name="Medigue C."/>
            <person name="Danchin A."/>
        </authorList>
    </citation>
    <scope>SEQUENCE REVISION TO 193-194 AND 376</scope>
</reference>
<reference key="5">
    <citation type="journal article" date="1991" name="J. Bacteriol.">
        <title>Cloning, sequencing, and expression of Bacillus subtilis genes involved in ATP-dependent nuclease synthesis.</title>
        <authorList>
            <person name="Kooistra J."/>
            <person name="Venema G."/>
        </authorList>
    </citation>
    <scope>NUCLEOTIDE SEQUENCE [GENOMIC DNA] OF 1-325</scope>
</reference>
<reference key="6">
    <citation type="journal article" date="1993" name="Nucleic Acids Res.">
        <title>Location of the Bacillus subtilis sbcD gene downstream of addAB, the analogues of E. coli recBC.</title>
        <authorList>
            <person name="Sharples G.J."/>
            <person name="Lloyd R.G."/>
        </authorList>
    </citation>
    <scope>IDENTIFICATION</scope>
</reference>
<gene>
    <name type="primary">sbcD</name>
    <name type="synonym">yixA</name>
    <name type="ordered locus">BSU10640</name>
</gene>
<organism>
    <name type="scientific">Bacillus subtilis (strain 168)</name>
    <dbReference type="NCBI Taxonomy" id="224308"/>
    <lineage>
        <taxon>Bacteria</taxon>
        <taxon>Bacillati</taxon>
        <taxon>Bacillota</taxon>
        <taxon>Bacilli</taxon>
        <taxon>Bacillales</taxon>
        <taxon>Bacillaceae</taxon>
        <taxon>Bacillus</taxon>
    </lineage>
</organism>
<proteinExistence type="inferred from homology"/>
<comment type="function">
    <text evidence="1">SbcCD cleaves DNA hairpin structures. These structures can inhibit DNA replication and are intermediates in certain DNA recombination reactions. The complex acts as a 3'-&gt;5' double strand exonuclease that can open hairpins. It also has a 5' single-strand endonuclease activity (By similarity).</text>
</comment>
<comment type="subunit">
    <text evidence="1">Heterodimer of SbcC and SbcD.</text>
</comment>
<comment type="similarity">
    <text evidence="2">Belongs to the SbcD family.</text>
</comment>
<comment type="sequence caution" evidence="2">
    <conflict type="frameshift">
        <sequence resource="EMBL-CDS" id="AAA22202"/>
    </conflict>
</comment>
<comment type="sequence caution" evidence="2">
    <conflict type="frameshift">
        <sequence resource="EMBL-CDS" id="CAA70669"/>
    </conflict>
</comment>
<dbReference type="EMBL" id="Y09476">
    <property type="protein sequence ID" value="CAA70669.1"/>
    <property type="status" value="ALT_FRAME"/>
    <property type="molecule type" value="Genomic_DNA"/>
</dbReference>
<dbReference type="EMBL" id="AL009126">
    <property type="protein sequence ID" value="CAB12904.3"/>
    <property type="molecule type" value="Genomic_DNA"/>
</dbReference>
<dbReference type="EMBL" id="M63489">
    <property type="protein sequence ID" value="AAA22202.1"/>
    <property type="status" value="ALT_FRAME"/>
    <property type="molecule type" value="Genomic_DNA"/>
</dbReference>
<dbReference type="PIR" id="C39432">
    <property type="entry name" value="C39432"/>
</dbReference>
<dbReference type="RefSeq" id="NP_388945.3">
    <property type="nucleotide sequence ID" value="NC_000964.3"/>
</dbReference>
<dbReference type="RefSeq" id="WP_003233099.1">
    <property type="nucleotide sequence ID" value="NZ_OZ025638.1"/>
</dbReference>
<dbReference type="SMR" id="P23479"/>
<dbReference type="FunCoup" id="P23479">
    <property type="interactions" value="44"/>
</dbReference>
<dbReference type="STRING" id="224308.BSU10640"/>
<dbReference type="PaxDb" id="224308-BSU10640"/>
<dbReference type="EnsemblBacteria" id="CAB12904">
    <property type="protein sequence ID" value="CAB12904"/>
    <property type="gene ID" value="BSU_10640"/>
</dbReference>
<dbReference type="GeneID" id="936351"/>
<dbReference type="KEGG" id="bsu:BSU10640"/>
<dbReference type="PATRIC" id="fig|224308.179.peg.1144"/>
<dbReference type="eggNOG" id="COG0420">
    <property type="taxonomic scope" value="Bacteria"/>
</dbReference>
<dbReference type="InParanoid" id="P23479"/>
<dbReference type="OrthoDB" id="9773856at2"/>
<dbReference type="PhylomeDB" id="P23479"/>
<dbReference type="BioCyc" id="BSUB:BSU10640-MONOMER"/>
<dbReference type="Proteomes" id="UP000001570">
    <property type="component" value="Chromosome"/>
</dbReference>
<dbReference type="GO" id="GO:0008408">
    <property type="term" value="F:3'-5' exonuclease activity"/>
    <property type="evidence" value="ECO:0007669"/>
    <property type="project" value="InterPro"/>
</dbReference>
<dbReference type="GO" id="GO:0003677">
    <property type="term" value="F:DNA binding"/>
    <property type="evidence" value="ECO:0000318"/>
    <property type="project" value="GO_Central"/>
</dbReference>
<dbReference type="GO" id="GO:0004529">
    <property type="term" value="F:DNA exonuclease activity"/>
    <property type="evidence" value="ECO:0000318"/>
    <property type="project" value="GO_Central"/>
</dbReference>
<dbReference type="GO" id="GO:0004519">
    <property type="term" value="F:endonuclease activity"/>
    <property type="evidence" value="ECO:0007669"/>
    <property type="project" value="InterPro"/>
</dbReference>
<dbReference type="GO" id="GO:0006310">
    <property type="term" value="P:DNA recombination"/>
    <property type="evidence" value="ECO:0007669"/>
    <property type="project" value="UniProtKB-KW"/>
</dbReference>
<dbReference type="GO" id="GO:0006281">
    <property type="term" value="P:DNA repair"/>
    <property type="evidence" value="ECO:0000318"/>
    <property type="project" value="GO_Central"/>
</dbReference>
<dbReference type="CDD" id="cd00840">
    <property type="entry name" value="MPP_Mre11_N"/>
    <property type="match status" value="1"/>
</dbReference>
<dbReference type="Gene3D" id="3.60.21.10">
    <property type="match status" value="1"/>
</dbReference>
<dbReference type="InterPro" id="IPR004843">
    <property type="entry name" value="Calcineurin-like_PHP_ApaH"/>
</dbReference>
<dbReference type="InterPro" id="IPR050535">
    <property type="entry name" value="DNA_Repair-Maintenance_Comp"/>
</dbReference>
<dbReference type="InterPro" id="IPR029052">
    <property type="entry name" value="Metallo-depent_PP-like"/>
</dbReference>
<dbReference type="InterPro" id="IPR041796">
    <property type="entry name" value="Mre11_N"/>
</dbReference>
<dbReference type="InterPro" id="IPR004593">
    <property type="entry name" value="SbcD"/>
</dbReference>
<dbReference type="InterPro" id="IPR026843">
    <property type="entry name" value="SbcD_C"/>
</dbReference>
<dbReference type="InterPro" id="IPR053601">
    <property type="entry name" value="SbcD_nuclease"/>
</dbReference>
<dbReference type="NCBIfam" id="TIGR00619">
    <property type="entry name" value="sbcd"/>
    <property type="match status" value="1"/>
</dbReference>
<dbReference type="NCBIfam" id="NF041754">
    <property type="entry name" value="sbcd_Bac"/>
    <property type="match status" value="1"/>
</dbReference>
<dbReference type="PANTHER" id="PTHR30337">
    <property type="entry name" value="COMPONENT OF ATP-DEPENDENT DSDNA EXONUCLEASE"/>
    <property type="match status" value="1"/>
</dbReference>
<dbReference type="PANTHER" id="PTHR30337:SF0">
    <property type="entry name" value="NUCLEASE SBCCD SUBUNIT D"/>
    <property type="match status" value="1"/>
</dbReference>
<dbReference type="Pfam" id="PF00149">
    <property type="entry name" value="Metallophos"/>
    <property type="match status" value="1"/>
</dbReference>
<dbReference type="Pfam" id="PF12320">
    <property type="entry name" value="SbcD_C"/>
    <property type="match status" value="1"/>
</dbReference>
<dbReference type="SUPFAM" id="SSF56300">
    <property type="entry name" value="Metallo-dependent phosphatases"/>
    <property type="match status" value="1"/>
</dbReference>
<sequence>MRILHTADWHLGKTLEGRSRLSEQADVLDELNTIVKDEQIDAIVMAGDAFDTVNPPALAEQLFYESLSALSDRGKRPIVVIAGNHDNPDRLSAASPLTHENGIHLIGYPTTEPIHIEVPSAGELLAVGALAYPSEARLNEVLSDTFDEKLLRDHYDVKIRQAFEHMTSRFRTDAVKIAASHIYVAGGNQTDSERPIEVGGAYTVAAESLPADAAYVALGHLHRPQTIKRARTLARYSGSPLAYSFSEAGYAKSVTIVDAKPGEEATWQEVLLSSGKPLVKWKAANGLSEVYSWLDEGRDQNAWIDLEIRVADQLSLEEIHRLRKAHPGFIHIRPVFEEQNKDRERIEVKHVSIEDRFKKFYEKQTGGAVPDEEMVKLFLELASGVEEEDAK</sequence>
<evidence type="ECO:0000250" key="1"/>
<evidence type="ECO:0000305" key="2"/>
<feature type="chain" id="PRO_0000182193" description="Nuclease SbcCD subunit D">
    <location>
        <begin position="1"/>
        <end position="391"/>
    </location>
</feature>
<feature type="sequence conflict" description="In Ref. 5; AAA22202." evidence="2" ref="5">
    <original>ER</original>
    <variation>DG</variation>
    <location>
        <begin position="193"/>
        <end position="194"/>
    </location>
</feature>
<feature type="sequence conflict" description="In Ref. 1; CAA70669." evidence="2" ref="1">
    <original>K</original>
    <variation>R</variation>
    <location>
        <position position="376"/>
    </location>
</feature>